<keyword id="KW-0004">4Fe-4S</keyword>
<keyword id="KW-0067">ATP-binding</keyword>
<keyword id="KW-0227">DNA damage</keyword>
<keyword id="KW-0234">DNA repair</keyword>
<keyword id="KW-0238">DNA-binding</keyword>
<keyword id="KW-0269">Exonuclease</keyword>
<keyword id="KW-0347">Helicase</keyword>
<keyword id="KW-0378">Hydrolase</keyword>
<keyword id="KW-0408">Iron</keyword>
<keyword id="KW-0411">Iron-sulfur</keyword>
<keyword id="KW-0479">Metal-binding</keyword>
<keyword id="KW-0540">Nuclease</keyword>
<keyword id="KW-0547">Nucleotide-binding</keyword>
<keyword id="KW-1185">Reference proteome</keyword>
<proteinExistence type="inferred from homology"/>
<sequence length="1167" mass="134138">MSLRFLLGRSGSGKTAVCLEEIRRQLQEDPKGRAIVYLVPEQMTFQCEYALIHTEGVGGMIRAQVFSFTRLAWRVLQETGGMTRYHIHDVGVQMMIRKIIEQRKQELKLFGRAADKHGFIEQLNEMITECKRYCLTPGELRRHAKAFEDGPDQPGRRLLADKLSDVALVYEELERSLIGHYLDSEDYLRLLAEHIPRSSYLRDADIYIDGFHHFAPQEYMIIEQLLRHCRRVTVCLTIDRPYDDGMPDELHLFYLPAQTYRQLRELALSNDIAIEEPIVLSANRRHEDRALVHLEAQFHRRPLLPYGAKTDAVHLYEASNRRAEIEAVAREIIRLVRDEGARYRDIALIIRQTEAYRDLVKTVFFDFGIPYFMDEKEPMHHHPLIELVRAALETVVTRWRYEAVFRAVKTDLLFPTDGDLHMWREAADKLENYVLAYGIKGDKWTNNERWAYRRYQALDGLNVPQTDEERQFEDMLNEWREALAAPLRRLERRLRRAEDGRGFCMALYLFLEELQIPKKLEKMSAQAEADGRLVEARQHEQAWNAVVDLLDQYVEMLGTESLPLAEFVKIIEAGLDRLEFSLVPPAMDQVIVAQLDRSRLIDIKYAFVIGANDGVIPAKVKEDGLMAEVEREQLRELGVALAPGGREQLFYDPFFVYLALVCPSRRLYVTYPLADGEGKALMPSPLIKQLTELFPHAPVHLCGNDPFDAPAEKAEAFVTAPRATQTYLISQLRAWKRNYGIDPLWWDVYNTFIGHRDWKEQVRHAVSALFYTNGATPLKKQWSQRLYGKKIQASVSRMEQFQKCPYAHFASHGLRLKERNVFRLEAPDVGQLFHAAIKQIADRLREQHLDWRELSRPDCERLSAEAVERIAPLIQQQVLSSSHRYEYMKRKLKHVVARTTHVLSEHARASGFVPIGLELSFGPNGDLPPLRFRLPDGTVMELVGRIDRVDKAESSQGVLLRIIDYKSSAKTLDLTEVYYGLALQMLTYLDIVLTYAEQLVGQPALPAGVLYFHIHNPIVQAKQWVDDEVEMAKKLLEPFRMRGLLLADVEAIRLMDGRTEDGQWSLIVPAQLTKSGSIHSRSSVASPSDFAALRQHVRRLFIDIGGQIADGVVSIAPYKLKDKTACEFCVFKPVCQFDEALSGNEYRKLAPQTKEAVIEKLAEGKEG</sequence>
<protein>
    <recommendedName>
        <fullName evidence="1">ATP-dependent helicase/deoxyribonuclease subunit B</fullName>
        <ecNumber evidence="1">3.1.-.-</ecNumber>
    </recommendedName>
    <alternativeName>
        <fullName evidence="1">ATP-dependent helicase/nuclease subunit AddB</fullName>
    </alternativeName>
</protein>
<comment type="function">
    <text evidence="1">The heterodimer acts as both an ATP-dependent DNA helicase and an ATP-dependent, dual-direction single-stranded exonuclease. Recognizes the chi site generating a DNA molecule suitable for the initiation of homologous recombination. The AddB subunit has 5' -&gt; 3' nuclease activity but not helicase activity.</text>
</comment>
<comment type="cofactor">
    <cofactor evidence="1">
        <name>Mg(2+)</name>
        <dbReference type="ChEBI" id="CHEBI:18420"/>
    </cofactor>
</comment>
<comment type="cofactor">
    <cofactor evidence="1">
        <name>[4Fe-4S] cluster</name>
        <dbReference type="ChEBI" id="CHEBI:49883"/>
    </cofactor>
    <text evidence="1">Binds 1 [4Fe-4S] cluster.</text>
</comment>
<comment type="subunit">
    <text evidence="1">Heterodimer of AddA and AddB.</text>
</comment>
<comment type="miscellaneous">
    <text evidence="1">Despite having conserved helicase domains, this subunit does not have helicase activity.</text>
</comment>
<comment type="similarity">
    <text evidence="1">Belongs to the helicase family. AddB/RexB type 1 subfamily.</text>
</comment>
<gene>
    <name evidence="1" type="primary">addB</name>
    <name type="ordered locus">GK0681</name>
</gene>
<dbReference type="EC" id="3.1.-.-" evidence="1"/>
<dbReference type="EMBL" id="BA000043">
    <property type="protein sequence ID" value="BAD74966.1"/>
    <property type="molecule type" value="Genomic_DNA"/>
</dbReference>
<dbReference type="RefSeq" id="WP_011230184.1">
    <property type="nucleotide sequence ID" value="NC_006510.1"/>
</dbReference>
<dbReference type="SMR" id="Q5L264"/>
<dbReference type="STRING" id="235909.GK0681"/>
<dbReference type="KEGG" id="gka:GK0681"/>
<dbReference type="eggNOG" id="COG3857">
    <property type="taxonomic scope" value="Bacteria"/>
</dbReference>
<dbReference type="HOGENOM" id="CLU_007838_0_0_9"/>
<dbReference type="Proteomes" id="UP000001172">
    <property type="component" value="Chromosome"/>
</dbReference>
<dbReference type="GO" id="GO:0051539">
    <property type="term" value="F:4 iron, 4 sulfur cluster binding"/>
    <property type="evidence" value="ECO:0007669"/>
    <property type="project" value="UniProtKB-KW"/>
</dbReference>
<dbReference type="GO" id="GO:0008409">
    <property type="term" value="F:5'-3' exonuclease activity"/>
    <property type="evidence" value="ECO:0007669"/>
    <property type="project" value="UniProtKB-UniRule"/>
</dbReference>
<dbReference type="GO" id="GO:0005524">
    <property type="term" value="F:ATP binding"/>
    <property type="evidence" value="ECO:0007669"/>
    <property type="project" value="UniProtKB-UniRule"/>
</dbReference>
<dbReference type="GO" id="GO:0003690">
    <property type="term" value="F:double-stranded DNA binding"/>
    <property type="evidence" value="ECO:0007669"/>
    <property type="project" value="UniProtKB-UniRule"/>
</dbReference>
<dbReference type="GO" id="GO:0004386">
    <property type="term" value="F:helicase activity"/>
    <property type="evidence" value="ECO:0007669"/>
    <property type="project" value="UniProtKB-KW"/>
</dbReference>
<dbReference type="GO" id="GO:0046872">
    <property type="term" value="F:metal ion binding"/>
    <property type="evidence" value="ECO:0007669"/>
    <property type="project" value="UniProtKB-KW"/>
</dbReference>
<dbReference type="GO" id="GO:0000724">
    <property type="term" value="P:double-strand break repair via homologous recombination"/>
    <property type="evidence" value="ECO:0007669"/>
    <property type="project" value="UniProtKB-UniRule"/>
</dbReference>
<dbReference type="Gene3D" id="6.10.140.1030">
    <property type="match status" value="1"/>
</dbReference>
<dbReference type="Gene3D" id="3.40.50.300">
    <property type="entry name" value="P-loop containing nucleotide triphosphate hydrolases"/>
    <property type="match status" value="4"/>
</dbReference>
<dbReference type="HAMAP" id="MF_01452">
    <property type="entry name" value="AddB_type1"/>
    <property type="match status" value="1"/>
</dbReference>
<dbReference type="InterPro" id="IPR049035">
    <property type="entry name" value="ADDB_N"/>
</dbReference>
<dbReference type="InterPro" id="IPR014140">
    <property type="entry name" value="DNA_helicase_suAddB"/>
</dbReference>
<dbReference type="InterPro" id="IPR014017">
    <property type="entry name" value="DNA_helicase_UvrD-like_C"/>
</dbReference>
<dbReference type="InterPro" id="IPR027417">
    <property type="entry name" value="P-loop_NTPase"/>
</dbReference>
<dbReference type="InterPro" id="IPR038726">
    <property type="entry name" value="PDDEXK_AddAB-type"/>
</dbReference>
<dbReference type="NCBIfam" id="TIGR02773">
    <property type="entry name" value="addB_Gpos"/>
    <property type="match status" value="1"/>
</dbReference>
<dbReference type="PANTHER" id="PTHR30591">
    <property type="entry name" value="RECBCD ENZYME SUBUNIT RECC"/>
    <property type="match status" value="1"/>
</dbReference>
<dbReference type="PANTHER" id="PTHR30591:SF1">
    <property type="entry name" value="RECBCD ENZYME SUBUNIT RECC"/>
    <property type="match status" value="1"/>
</dbReference>
<dbReference type="Pfam" id="PF21445">
    <property type="entry name" value="ADDB_N"/>
    <property type="match status" value="1"/>
</dbReference>
<dbReference type="Pfam" id="PF12705">
    <property type="entry name" value="PDDEXK_1"/>
    <property type="match status" value="1"/>
</dbReference>
<dbReference type="Pfam" id="PF13361">
    <property type="entry name" value="UvrD_C"/>
    <property type="match status" value="1"/>
</dbReference>
<dbReference type="SUPFAM" id="SSF52540">
    <property type="entry name" value="P-loop containing nucleoside triphosphate hydrolases"/>
    <property type="match status" value="2"/>
</dbReference>
<dbReference type="PROSITE" id="PS51198">
    <property type="entry name" value="UVRD_HELICASE_ATP_BIND"/>
    <property type="match status" value="1"/>
</dbReference>
<dbReference type="PROSITE" id="PS51217">
    <property type="entry name" value="UVRD_HELICASE_CTER"/>
    <property type="match status" value="1"/>
</dbReference>
<name>ADDB_GEOKA</name>
<feature type="chain" id="PRO_0000379191" description="ATP-dependent helicase/deoxyribonuclease subunit B">
    <location>
        <begin position="1"/>
        <end position="1167"/>
    </location>
</feature>
<feature type="domain" description="UvrD-like helicase ATP-binding" evidence="1">
    <location>
        <begin position="1"/>
        <end position="359"/>
    </location>
</feature>
<feature type="domain" description="UvrD-like helicase C-terminal" evidence="1">
    <location>
        <begin position="282"/>
        <end position="588"/>
    </location>
</feature>
<feature type="binding site" evidence="1">
    <location>
        <begin position="8"/>
        <end position="15"/>
    </location>
    <ligand>
        <name>ATP</name>
        <dbReference type="ChEBI" id="CHEBI:30616"/>
    </ligand>
</feature>
<feature type="binding site" evidence="1">
    <location>
        <position position="804"/>
    </location>
    <ligand>
        <name>[4Fe-4S] cluster</name>
        <dbReference type="ChEBI" id="CHEBI:49883"/>
    </ligand>
</feature>
<feature type="binding site" evidence="1">
    <location>
        <position position="1126"/>
    </location>
    <ligand>
        <name>[4Fe-4S] cluster</name>
        <dbReference type="ChEBI" id="CHEBI:49883"/>
    </ligand>
</feature>
<feature type="binding site" evidence="1">
    <location>
        <position position="1129"/>
    </location>
    <ligand>
        <name>[4Fe-4S] cluster</name>
        <dbReference type="ChEBI" id="CHEBI:49883"/>
    </ligand>
</feature>
<feature type="binding site" evidence="1">
    <location>
        <position position="1135"/>
    </location>
    <ligand>
        <name>[4Fe-4S] cluster</name>
        <dbReference type="ChEBI" id="CHEBI:49883"/>
    </ligand>
</feature>
<accession>Q5L264</accession>
<evidence type="ECO:0000255" key="1">
    <source>
        <dbReference type="HAMAP-Rule" id="MF_01452"/>
    </source>
</evidence>
<organism>
    <name type="scientific">Geobacillus kaustophilus (strain HTA426)</name>
    <dbReference type="NCBI Taxonomy" id="235909"/>
    <lineage>
        <taxon>Bacteria</taxon>
        <taxon>Bacillati</taxon>
        <taxon>Bacillota</taxon>
        <taxon>Bacilli</taxon>
        <taxon>Bacillales</taxon>
        <taxon>Anoxybacillaceae</taxon>
        <taxon>Geobacillus</taxon>
        <taxon>Geobacillus thermoleovorans group</taxon>
    </lineage>
</organism>
<reference key="1">
    <citation type="journal article" date="2004" name="Nucleic Acids Res.">
        <title>Thermoadaptation trait revealed by the genome sequence of thermophilic Geobacillus kaustophilus.</title>
        <authorList>
            <person name="Takami H."/>
            <person name="Takaki Y."/>
            <person name="Chee G.-J."/>
            <person name="Nishi S."/>
            <person name="Shimamura S."/>
            <person name="Suzuki H."/>
            <person name="Matsui S."/>
            <person name="Uchiyama I."/>
        </authorList>
    </citation>
    <scope>NUCLEOTIDE SEQUENCE [LARGE SCALE GENOMIC DNA]</scope>
    <source>
        <strain>HTA426</strain>
    </source>
</reference>